<keyword id="KW-0002">3D-structure</keyword>
<keyword id="KW-0903">Direct protein sequencing</keyword>
<keyword id="KW-0539">Nucleus</keyword>
<keyword id="KW-1267">Proteomics identification</keyword>
<keyword id="KW-1185">Reference proteome</keyword>
<keyword id="KW-0690">Ribosome biogenesis</keyword>
<name>TSR1_HUMAN</name>
<organism>
    <name type="scientific">Homo sapiens</name>
    <name type="common">Human</name>
    <dbReference type="NCBI Taxonomy" id="9606"/>
    <lineage>
        <taxon>Eukaryota</taxon>
        <taxon>Metazoa</taxon>
        <taxon>Chordata</taxon>
        <taxon>Craniata</taxon>
        <taxon>Vertebrata</taxon>
        <taxon>Euteleostomi</taxon>
        <taxon>Mammalia</taxon>
        <taxon>Eutheria</taxon>
        <taxon>Euarchontoglires</taxon>
        <taxon>Primates</taxon>
        <taxon>Haplorrhini</taxon>
        <taxon>Catarrhini</taxon>
        <taxon>Hominidae</taxon>
        <taxon>Homo</taxon>
    </lineage>
</organism>
<accession>Q2NL82</accession>
<accession>Q8WUY5</accession>
<accession>Q9NVT0</accession>
<accession>Q9P2E6</accession>
<evidence type="ECO:0000250" key="1"/>
<evidence type="ECO:0000255" key="2">
    <source>
        <dbReference type="PROSITE-ProRule" id="PRU01051"/>
    </source>
</evidence>
<evidence type="ECO:0000256" key="3">
    <source>
        <dbReference type="SAM" id="MobiDB-lite"/>
    </source>
</evidence>
<evidence type="ECO:0000269" key="4">
    <source>
    </source>
</evidence>
<evidence type="ECO:0000305" key="5"/>
<evidence type="ECO:0007829" key="6">
    <source>
        <dbReference type="PDB" id="6ZMT"/>
    </source>
</evidence>
<evidence type="ECO:0007829" key="7">
    <source>
        <dbReference type="PDB" id="6ZN5"/>
    </source>
</evidence>
<evidence type="ECO:0007829" key="8">
    <source>
        <dbReference type="PDB" id="7WTT"/>
    </source>
</evidence>
<evidence type="ECO:0007829" key="9">
    <source>
        <dbReference type="PDB" id="7WTU"/>
    </source>
</evidence>
<evidence type="ECO:0007829" key="10">
    <source>
        <dbReference type="PDB" id="7WTW"/>
    </source>
</evidence>
<evidence type="ECO:0007829" key="11">
    <source>
        <dbReference type="PDB" id="7WTZ"/>
    </source>
</evidence>
<feature type="chain" id="PRO_0000311274" description="Pre-rRNA-processing protein TSR1 homolog">
    <location>
        <begin position="1"/>
        <end position="804"/>
    </location>
</feature>
<feature type="domain" description="Bms1-type G" evidence="2">
    <location>
        <begin position="81"/>
        <end position="242"/>
    </location>
</feature>
<feature type="region of interest" description="Disordered" evidence="3">
    <location>
        <begin position="1"/>
        <end position="67"/>
    </location>
</feature>
<feature type="compositionally biased region" description="Basic residues" evidence="3">
    <location>
        <begin position="13"/>
        <end position="24"/>
    </location>
</feature>
<feature type="compositionally biased region" description="Basic and acidic residues" evidence="3">
    <location>
        <begin position="46"/>
        <end position="55"/>
    </location>
</feature>
<feature type="sequence variant" id="VAR_037211" description="In dbSNP:rs2281726." evidence="4">
    <original>S</original>
    <variation>G</variation>
    <location>
        <position position="386"/>
    </location>
</feature>
<feature type="sequence variant" id="VAR_037212" description="In dbSNP:rs2273983.">
    <original>N</original>
    <variation>S</variation>
    <location>
        <position position="719"/>
    </location>
</feature>
<feature type="sequence variant" id="VAR_037213" description="In dbSNP:rs35019711.">
    <original>K</original>
    <variation>Q</variation>
    <location>
        <position position="727"/>
    </location>
</feature>
<feature type="sequence variant" id="VAR_037214" description="In dbSNP:rs35343613.">
    <original>H</original>
    <variation>Q</variation>
    <location>
        <position position="750"/>
    </location>
</feature>
<feature type="sequence conflict" description="In Ref. 5; BAA91667." evidence="5" ref="5">
    <original>G</original>
    <variation>C</variation>
    <location>
        <position position="350"/>
    </location>
</feature>
<feature type="sequence conflict" description="In Ref. 1; BAA92639." evidence="5" ref="1">
    <original>R</original>
    <variation>W</variation>
    <location>
        <position position="737"/>
    </location>
</feature>
<feature type="strand" evidence="10">
    <location>
        <begin position="8"/>
        <end position="10"/>
    </location>
</feature>
<feature type="helix" evidence="6">
    <location>
        <begin position="50"/>
        <end position="71"/>
    </location>
</feature>
<feature type="strand" evidence="6">
    <location>
        <begin position="74"/>
        <end position="80"/>
    </location>
</feature>
<feature type="strand" evidence="6">
    <location>
        <begin position="83"/>
        <end position="91"/>
    </location>
</feature>
<feature type="helix" evidence="6">
    <location>
        <begin position="96"/>
        <end position="103"/>
    </location>
</feature>
<feature type="strand" evidence="6">
    <location>
        <begin position="110"/>
        <end position="112"/>
    </location>
</feature>
<feature type="strand" evidence="7">
    <location>
        <begin position="117"/>
        <end position="119"/>
    </location>
</feature>
<feature type="strand" evidence="6">
    <location>
        <begin position="122"/>
        <end position="126"/>
    </location>
</feature>
<feature type="turn" evidence="6">
    <location>
        <begin position="127"/>
        <end position="130"/>
    </location>
</feature>
<feature type="strand" evidence="6">
    <location>
        <begin position="131"/>
        <end position="137"/>
    </location>
</feature>
<feature type="helix" evidence="6">
    <location>
        <begin position="143"/>
        <end position="149"/>
    </location>
</feature>
<feature type="turn" evidence="6">
    <location>
        <begin position="150"/>
        <end position="152"/>
    </location>
</feature>
<feature type="strand" evidence="6">
    <location>
        <begin position="154"/>
        <end position="160"/>
    </location>
</feature>
<feature type="strand" evidence="6">
    <location>
        <begin position="162"/>
        <end position="165"/>
    </location>
</feature>
<feature type="helix" evidence="6">
    <location>
        <begin position="168"/>
        <end position="180"/>
    </location>
</feature>
<feature type="strand" evidence="6">
    <location>
        <begin position="184"/>
        <end position="186"/>
    </location>
</feature>
<feature type="strand" evidence="7">
    <location>
        <begin position="188"/>
        <end position="190"/>
    </location>
</feature>
<feature type="strand" evidence="6">
    <location>
        <begin position="193"/>
        <end position="195"/>
    </location>
</feature>
<feature type="turn" evidence="6">
    <location>
        <begin position="197"/>
        <end position="202"/>
    </location>
</feature>
<feature type="helix" evidence="6">
    <location>
        <begin position="203"/>
        <end position="211"/>
    </location>
</feature>
<feature type="turn" evidence="6">
    <location>
        <begin position="212"/>
        <end position="214"/>
    </location>
</feature>
<feature type="strand" evidence="6">
    <location>
        <begin position="215"/>
        <end position="217"/>
    </location>
</feature>
<feature type="strand" evidence="9">
    <location>
        <begin position="220"/>
        <end position="222"/>
    </location>
</feature>
<feature type="helix" evidence="6">
    <location>
        <begin position="226"/>
        <end position="237"/>
    </location>
</feature>
<feature type="helix" evidence="6">
    <location>
        <begin position="245"/>
        <end position="249"/>
    </location>
</feature>
<feature type="strand" evidence="9">
    <location>
        <begin position="252"/>
        <end position="254"/>
    </location>
</feature>
<feature type="strand" evidence="6">
    <location>
        <begin position="256"/>
        <end position="264"/>
    </location>
</feature>
<feature type="turn" evidence="6">
    <location>
        <begin position="265"/>
        <end position="268"/>
    </location>
</feature>
<feature type="strand" evidence="6">
    <location>
        <begin position="269"/>
        <end position="278"/>
    </location>
</feature>
<feature type="strand" evidence="6">
    <location>
        <begin position="285"/>
        <end position="287"/>
    </location>
</feature>
<feature type="strand" evidence="6">
    <location>
        <begin position="289"/>
        <end position="291"/>
    </location>
</feature>
<feature type="turn" evidence="9">
    <location>
        <begin position="292"/>
        <end position="294"/>
    </location>
</feature>
<feature type="strand" evidence="9">
    <location>
        <begin position="295"/>
        <end position="297"/>
    </location>
</feature>
<feature type="strand" evidence="6">
    <location>
        <begin position="299"/>
        <end position="304"/>
    </location>
</feature>
<feature type="strand" evidence="11">
    <location>
        <begin position="343"/>
        <end position="347"/>
    </location>
</feature>
<feature type="turn" evidence="6">
    <location>
        <begin position="350"/>
        <end position="352"/>
    </location>
</feature>
<feature type="helix" evidence="9">
    <location>
        <begin position="401"/>
        <end position="403"/>
    </location>
</feature>
<feature type="helix" evidence="6">
    <location>
        <begin position="465"/>
        <end position="480"/>
    </location>
</feature>
<feature type="turn" evidence="6">
    <location>
        <begin position="481"/>
        <end position="483"/>
    </location>
</feature>
<feature type="strand" evidence="6">
    <location>
        <begin position="484"/>
        <end position="487"/>
    </location>
</feature>
<feature type="strand" evidence="6">
    <location>
        <begin position="492"/>
        <end position="494"/>
    </location>
</feature>
<feature type="helix" evidence="6">
    <location>
        <begin position="496"/>
        <end position="499"/>
    </location>
</feature>
<feature type="turn" evidence="6">
    <location>
        <begin position="500"/>
        <end position="502"/>
    </location>
</feature>
<feature type="turn" evidence="6">
    <location>
        <begin position="509"/>
        <end position="511"/>
    </location>
</feature>
<feature type="turn" evidence="8">
    <location>
        <begin position="516"/>
        <end position="519"/>
    </location>
</feature>
<feature type="helix" evidence="6">
    <location>
        <begin position="522"/>
        <end position="525"/>
    </location>
</feature>
<feature type="strand" evidence="9">
    <location>
        <begin position="528"/>
        <end position="531"/>
    </location>
</feature>
<feature type="helix" evidence="6">
    <location>
        <begin position="533"/>
        <end position="544"/>
    </location>
</feature>
<feature type="strand" evidence="6">
    <location>
        <begin position="545"/>
        <end position="547"/>
    </location>
</feature>
<feature type="strand" evidence="9">
    <location>
        <begin position="550"/>
        <end position="552"/>
    </location>
</feature>
<feature type="strand" evidence="6">
    <location>
        <begin position="557"/>
        <end position="563"/>
    </location>
</feature>
<feature type="strand" evidence="6">
    <location>
        <begin position="565"/>
        <end position="567"/>
    </location>
</feature>
<feature type="helix" evidence="6">
    <location>
        <begin position="568"/>
        <end position="575"/>
    </location>
</feature>
<feature type="strand" evidence="6">
    <location>
        <begin position="581"/>
        <end position="583"/>
    </location>
</feature>
<feature type="strand" evidence="6">
    <location>
        <begin position="589"/>
        <end position="598"/>
    </location>
</feature>
<feature type="strand" evidence="6">
    <location>
        <begin position="614"/>
        <end position="620"/>
    </location>
</feature>
<feature type="strand" evidence="6">
    <location>
        <begin position="623"/>
        <end position="625"/>
    </location>
</feature>
<feature type="strand" evidence="9">
    <location>
        <begin position="628"/>
        <end position="631"/>
    </location>
</feature>
<feature type="strand" evidence="6">
    <location>
        <begin position="634"/>
        <end position="640"/>
    </location>
</feature>
<feature type="strand" evidence="6">
    <location>
        <begin position="646"/>
        <end position="648"/>
    </location>
</feature>
<feature type="strand" evidence="6">
    <location>
        <begin position="650"/>
        <end position="657"/>
    </location>
</feature>
<feature type="strand" evidence="6">
    <location>
        <begin position="664"/>
        <end position="672"/>
    </location>
</feature>
<feature type="strand" evidence="6">
    <location>
        <begin position="675"/>
        <end position="684"/>
    </location>
</feature>
<feature type="strand" evidence="6">
    <location>
        <begin position="691"/>
        <end position="707"/>
    </location>
</feature>
<feature type="strand" evidence="6">
    <location>
        <begin position="710"/>
        <end position="716"/>
    </location>
</feature>
<feature type="strand" evidence="11">
    <location>
        <begin position="718"/>
        <end position="720"/>
    </location>
</feature>
<feature type="helix" evidence="6">
    <location>
        <begin position="721"/>
        <end position="725"/>
    </location>
</feature>
<feature type="turn" evidence="9">
    <location>
        <begin position="726"/>
        <end position="728"/>
    </location>
</feature>
<feature type="strand" evidence="6">
    <location>
        <begin position="731"/>
        <end position="733"/>
    </location>
</feature>
<feature type="strand" evidence="6">
    <location>
        <begin position="738"/>
        <end position="744"/>
    </location>
</feature>
<feature type="strand" evidence="6">
    <location>
        <begin position="746"/>
        <end position="749"/>
    </location>
</feature>
<feature type="strand" evidence="6">
    <location>
        <begin position="751"/>
        <end position="757"/>
    </location>
</feature>
<feature type="strand" evidence="6">
    <location>
        <begin position="765"/>
        <end position="772"/>
    </location>
</feature>
<feature type="strand" evidence="11">
    <location>
        <begin position="776"/>
        <end position="780"/>
    </location>
</feature>
<gene>
    <name type="primary">TSR1</name>
    <name type="synonym">KIAA1401</name>
</gene>
<comment type="function">
    <text evidence="1">Required during maturation of the 40S ribosomal subunit in the nucleolus.</text>
</comment>
<comment type="interaction">
    <interactant intactId="EBI-358058">
        <id>Q2NL82</id>
    </interactant>
    <interactant intactId="EBI-7062247">
        <id>Q9UHD4</id>
        <label>CIDEB</label>
    </interactant>
    <organismsDiffer>false</organismsDiffer>
    <experiments>3</experiments>
</comment>
<comment type="interaction">
    <interactant intactId="EBI-358058">
        <id>Q2NL82</id>
    </interactant>
    <interactant intactId="EBI-17589229">
        <id>Q6NTF9-3</id>
        <label>RHBDD2</label>
    </interactant>
    <organismsDiffer>false</organismsDiffer>
    <experiments>3</experiments>
</comment>
<comment type="subcellular location">
    <subcellularLocation>
        <location evidence="1">Nucleus</location>
        <location evidence="1">Nucleolus</location>
    </subcellularLocation>
</comment>
<comment type="similarity">
    <text evidence="5">Belongs to the TRAFAC class translation factor GTPase superfamily. Bms1-like GTPase family. TSR1 subfamily.</text>
</comment>
<comment type="sequence caution" evidence="5">
    <conflict type="erroneous initiation">
        <sequence resource="EMBL-CDS" id="BAA91667"/>
    </conflict>
</comment>
<comment type="sequence caution" evidence="5">
    <conflict type="erroneous initiation">
        <sequence resource="EMBL-CDS" id="BAA92639"/>
    </conflict>
</comment>
<dbReference type="EMBL" id="AB037822">
    <property type="protein sequence ID" value="BAA92639.1"/>
    <property type="status" value="ALT_INIT"/>
    <property type="molecule type" value="mRNA"/>
</dbReference>
<dbReference type="EMBL" id="CH471108">
    <property type="protein sequence ID" value="EAW90552.1"/>
    <property type="molecule type" value="Genomic_DNA"/>
</dbReference>
<dbReference type="EMBL" id="BC019090">
    <property type="protein sequence ID" value="AAH19090.2"/>
    <property type="molecule type" value="mRNA"/>
</dbReference>
<dbReference type="EMBL" id="BC110851">
    <property type="protein sequence ID" value="AAI10852.1"/>
    <property type="molecule type" value="mRNA"/>
</dbReference>
<dbReference type="EMBL" id="BC126110">
    <property type="protein sequence ID" value="AAI26111.1"/>
    <property type="molecule type" value="mRNA"/>
</dbReference>
<dbReference type="EMBL" id="AK001396">
    <property type="protein sequence ID" value="BAA91667.1"/>
    <property type="status" value="ALT_INIT"/>
    <property type="molecule type" value="mRNA"/>
</dbReference>
<dbReference type="CCDS" id="CCDS32525.1"/>
<dbReference type="RefSeq" id="NP_060598.3">
    <property type="nucleotide sequence ID" value="NM_018128.4"/>
</dbReference>
<dbReference type="PDB" id="6G18">
    <property type="method" value="EM"/>
    <property type="resolution" value="3.60 A"/>
    <property type="chains" value="u=1-804"/>
</dbReference>
<dbReference type="PDB" id="6G4S">
    <property type="method" value="EM"/>
    <property type="resolution" value="4.00 A"/>
    <property type="chains" value="u=1-804"/>
</dbReference>
<dbReference type="PDB" id="6G4W">
    <property type="method" value="EM"/>
    <property type="resolution" value="4.50 A"/>
    <property type="chains" value="u=1-804"/>
</dbReference>
<dbReference type="PDB" id="6G51">
    <property type="method" value="EM"/>
    <property type="resolution" value="4.10 A"/>
    <property type="chains" value="u=1-804"/>
</dbReference>
<dbReference type="PDB" id="6G53">
    <property type="method" value="EM"/>
    <property type="resolution" value="4.50 A"/>
    <property type="chains" value="u=1-804"/>
</dbReference>
<dbReference type="PDB" id="6ZMT">
    <property type="method" value="EM"/>
    <property type="resolution" value="3.00 A"/>
    <property type="chains" value="u=1-804"/>
</dbReference>
<dbReference type="PDB" id="6ZN5">
    <property type="method" value="EM"/>
    <property type="resolution" value="3.20 A"/>
    <property type="chains" value="u=1-804"/>
</dbReference>
<dbReference type="PDB" id="7WTS">
    <property type="method" value="EM"/>
    <property type="resolution" value="3.20 A"/>
    <property type="chains" value="u=1-804"/>
</dbReference>
<dbReference type="PDB" id="7WTT">
    <property type="method" value="EM"/>
    <property type="resolution" value="3.10 A"/>
    <property type="chains" value="u=1-804"/>
</dbReference>
<dbReference type="PDB" id="7WTU">
    <property type="method" value="EM"/>
    <property type="resolution" value="3.00 A"/>
    <property type="chains" value="u=1-804"/>
</dbReference>
<dbReference type="PDB" id="7WTV">
    <property type="method" value="EM"/>
    <property type="resolution" value="3.50 A"/>
    <property type="chains" value="u=1-804"/>
</dbReference>
<dbReference type="PDB" id="7WTW">
    <property type="method" value="EM"/>
    <property type="resolution" value="3.20 A"/>
    <property type="chains" value="u=1-804"/>
</dbReference>
<dbReference type="PDB" id="7WTX">
    <property type="method" value="EM"/>
    <property type="resolution" value="3.10 A"/>
    <property type="chains" value="u=1-804"/>
</dbReference>
<dbReference type="PDB" id="7WTZ">
    <property type="method" value="EM"/>
    <property type="resolution" value="3.00 A"/>
    <property type="chains" value="u=1-804"/>
</dbReference>
<dbReference type="PDB" id="7WU0">
    <property type="method" value="EM"/>
    <property type="resolution" value="3.30 A"/>
    <property type="chains" value="u=1-804"/>
</dbReference>
<dbReference type="PDB" id="8ZDC">
    <property type="method" value="EM"/>
    <property type="resolution" value="3.80 A"/>
    <property type="chains" value="u=1-804"/>
</dbReference>
<dbReference type="PDB" id="8ZDD">
    <property type="method" value="EM"/>
    <property type="resolution" value="3.70 A"/>
    <property type="chains" value="u=1-804"/>
</dbReference>
<dbReference type="PDBsum" id="6G18"/>
<dbReference type="PDBsum" id="6G4S"/>
<dbReference type="PDBsum" id="6G4W"/>
<dbReference type="PDBsum" id="6G51"/>
<dbReference type="PDBsum" id="6G53"/>
<dbReference type="PDBsum" id="6ZMT"/>
<dbReference type="PDBsum" id="6ZN5"/>
<dbReference type="PDBsum" id="7WTS"/>
<dbReference type="PDBsum" id="7WTT"/>
<dbReference type="PDBsum" id="7WTU"/>
<dbReference type="PDBsum" id="7WTV"/>
<dbReference type="PDBsum" id="7WTW"/>
<dbReference type="PDBsum" id="7WTX"/>
<dbReference type="PDBsum" id="7WTZ"/>
<dbReference type="PDBsum" id="7WU0"/>
<dbReference type="PDBsum" id="8ZDC"/>
<dbReference type="PDBsum" id="8ZDD"/>
<dbReference type="EMDB" id="EMD-11301"/>
<dbReference type="EMDB" id="EMD-11310"/>
<dbReference type="EMDB" id="EMD-32799"/>
<dbReference type="EMDB" id="EMD-32800"/>
<dbReference type="EMDB" id="EMD-32801"/>
<dbReference type="EMDB" id="EMD-32802"/>
<dbReference type="EMDB" id="EMD-32803"/>
<dbReference type="EMDB" id="EMD-32804"/>
<dbReference type="EMDB" id="EMD-32806"/>
<dbReference type="EMDB" id="EMD-32807"/>
<dbReference type="EMDB" id="EMD-39957"/>
<dbReference type="EMDB" id="EMD-39958"/>
<dbReference type="EMDB" id="EMD-4337"/>
<dbReference type="EMDB" id="EMD-4348"/>
<dbReference type="EMDB" id="EMD-4349"/>
<dbReference type="EMDB" id="EMD-4350"/>
<dbReference type="EMDB" id="EMD-4351"/>
<dbReference type="SMR" id="Q2NL82"/>
<dbReference type="BioGRID" id="120842">
    <property type="interactions" value="338"/>
</dbReference>
<dbReference type="FunCoup" id="Q2NL82">
    <property type="interactions" value="3037"/>
</dbReference>
<dbReference type="IntAct" id="Q2NL82">
    <property type="interactions" value="142"/>
</dbReference>
<dbReference type="MINT" id="Q2NL82"/>
<dbReference type="STRING" id="9606.ENSP00000301364"/>
<dbReference type="GlyGen" id="Q2NL82">
    <property type="glycosylation" value="1 site, 1 O-linked glycan (1 site)"/>
</dbReference>
<dbReference type="iPTMnet" id="Q2NL82"/>
<dbReference type="MetOSite" id="Q2NL82"/>
<dbReference type="PhosphoSitePlus" id="Q2NL82"/>
<dbReference type="BioMuta" id="TSR1"/>
<dbReference type="DMDM" id="121948971"/>
<dbReference type="jPOST" id="Q2NL82"/>
<dbReference type="MassIVE" id="Q2NL82"/>
<dbReference type="PaxDb" id="9606-ENSP00000301364"/>
<dbReference type="PeptideAtlas" id="Q2NL82"/>
<dbReference type="ProteomicsDB" id="61424"/>
<dbReference type="Pumba" id="Q2NL82"/>
<dbReference type="Antibodypedia" id="10721">
    <property type="antibodies" value="109 antibodies from 23 providers"/>
</dbReference>
<dbReference type="DNASU" id="55720"/>
<dbReference type="Ensembl" id="ENST00000301364.10">
    <property type="protein sequence ID" value="ENSP00000301364.4"/>
    <property type="gene ID" value="ENSG00000167721.11"/>
</dbReference>
<dbReference type="GeneID" id="55720"/>
<dbReference type="KEGG" id="hsa:55720"/>
<dbReference type="MANE-Select" id="ENST00000301364.10">
    <property type="protein sequence ID" value="ENSP00000301364.4"/>
    <property type="RefSeq nucleotide sequence ID" value="NM_018128.5"/>
    <property type="RefSeq protein sequence ID" value="NP_060598.3"/>
</dbReference>
<dbReference type="UCSC" id="uc002fuj.4">
    <property type="organism name" value="human"/>
</dbReference>
<dbReference type="AGR" id="HGNC:25542"/>
<dbReference type="CTD" id="55720"/>
<dbReference type="DisGeNET" id="55720"/>
<dbReference type="GeneCards" id="TSR1"/>
<dbReference type="HGNC" id="HGNC:25542">
    <property type="gene designation" value="TSR1"/>
</dbReference>
<dbReference type="HPA" id="ENSG00000167721">
    <property type="expression patterns" value="Low tissue specificity"/>
</dbReference>
<dbReference type="MIM" id="611214">
    <property type="type" value="gene"/>
</dbReference>
<dbReference type="neXtProt" id="NX_Q2NL82"/>
<dbReference type="OpenTargets" id="ENSG00000167721"/>
<dbReference type="PharmGKB" id="PA142670691"/>
<dbReference type="VEuPathDB" id="HostDB:ENSG00000167721"/>
<dbReference type="eggNOG" id="KOG1980">
    <property type="taxonomic scope" value="Eukaryota"/>
</dbReference>
<dbReference type="GeneTree" id="ENSGT00940000153195"/>
<dbReference type="HOGENOM" id="CLU_009858_1_0_1"/>
<dbReference type="InParanoid" id="Q2NL82"/>
<dbReference type="OMA" id="MNLPRFK"/>
<dbReference type="OrthoDB" id="119302at2759"/>
<dbReference type="PAN-GO" id="Q2NL82">
    <property type="GO annotations" value="6 GO annotations based on evolutionary models"/>
</dbReference>
<dbReference type="PhylomeDB" id="Q2NL82"/>
<dbReference type="TreeFam" id="TF105717"/>
<dbReference type="PathwayCommons" id="Q2NL82"/>
<dbReference type="Reactome" id="R-HSA-6791226">
    <property type="pathway name" value="Major pathway of rRNA processing in the nucleolus and cytosol"/>
</dbReference>
<dbReference type="SignaLink" id="Q2NL82"/>
<dbReference type="BioGRID-ORCS" id="55720">
    <property type="hits" value="736 hits in 1165 CRISPR screens"/>
</dbReference>
<dbReference type="CD-CODE" id="91857CE7">
    <property type="entry name" value="Nucleolus"/>
</dbReference>
<dbReference type="ChiTaRS" id="TSR1">
    <property type="organism name" value="human"/>
</dbReference>
<dbReference type="GenomeRNAi" id="55720"/>
<dbReference type="Pharos" id="Q2NL82">
    <property type="development level" value="Tbio"/>
</dbReference>
<dbReference type="PRO" id="PR:Q2NL82"/>
<dbReference type="Proteomes" id="UP000005640">
    <property type="component" value="Chromosome 17"/>
</dbReference>
<dbReference type="RNAct" id="Q2NL82">
    <property type="molecule type" value="protein"/>
</dbReference>
<dbReference type="Bgee" id="ENSG00000167721">
    <property type="expression patterns" value="Expressed in cervix squamous epithelium and 227 other cell types or tissues"/>
</dbReference>
<dbReference type="ExpressionAtlas" id="Q2NL82">
    <property type="expression patterns" value="baseline and differential"/>
</dbReference>
<dbReference type="GO" id="GO:0005829">
    <property type="term" value="C:cytosol"/>
    <property type="evidence" value="ECO:0000304"/>
    <property type="project" value="Reactome"/>
</dbReference>
<dbReference type="GO" id="GO:0005730">
    <property type="term" value="C:nucleolus"/>
    <property type="evidence" value="ECO:0000250"/>
    <property type="project" value="UniProtKB"/>
</dbReference>
<dbReference type="GO" id="GO:0005654">
    <property type="term" value="C:nucleoplasm"/>
    <property type="evidence" value="ECO:0000304"/>
    <property type="project" value="Reactome"/>
</dbReference>
<dbReference type="GO" id="GO:0005525">
    <property type="term" value="F:GTP binding"/>
    <property type="evidence" value="ECO:0000318"/>
    <property type="project" value="GO_Central"/>
</dbReference>
<dbReference type="GO" id="GO:0003924">
    <property type="term" value="F:GTPase activity"/>
    <property type="evidence" value="ECO:0000318"/>
    <property type="project" value="GO_Central"/>
</dbReference>
<dbReference type="GO" id="GO:0003723">
    <property type="term" value="F:RNA binding"/>
    <property type="evidence" value="ECO:0007005"/>
    <property type="project" value="UniProtKB"/>
</dbReference>
<dbReference type="GO" id="GO:0034511">
    <property type="term" value="F:U3 snoRNA binding"/>
    <property type="evidence" value="ECO:0000318"/>
    <property type="project" value="GO_Central"/>
</dbReference>
<dbReference type="GO" id="GO:0000479">
    <property type="term" value="P:endonucleolytic cleavage of tricistronic rRNA transcript (SSU-rRNA, 5.8S rRNA, LSU-rRNA)"/>
    <property type="evidence" value="ECO:0000318"/>
    <property type="project" value="GO_Central"/>
</dbReference>
<dbReference type="GO" id="GO:0000462">
    <property type="term" value="P:maturation of SSU-rRNA from tricistronic rRNA transcript (SSU-rRNA, 5.8S rRNA, LSU-rRNA)"/>
    <property type="evidence" value="ECO:0000318"/>
    <property type="project" value="GO_Central"/>
</dbReference>
<dbReference type="InterPro" id="IPR012948">
    <property type="entry name" value="AARP2CN"/>
</dbReference>
<dbReference type="InterPro" id="IPR039761">
    <property type="entry name" value="Bms1/Tsr1"/>
</dbReference>
<dbReference type="InterPro" id="IPR007034">
    <property type="entry name" value="BMS1_TSR1_C"/>
</dbReference>
<dbReference type="InterPro" id="IPR030387">
    <property type="entry name" value="G_Bms1/Tsr1_dom"/>
</dbReference>
<dbReference type="PANTHER" id="PTHR12858:SF1">
    <property type="entry name" value="PRE-RRNA-PROCESSING PROTEIN TSR1 HOMOLOG"/>
    <property type="match status" value="1"/>
</dbReference>
<dbReference type="PANTHER" id="PTHR12858">
    <property type="entry name" value="RIBOSOME BIOGENESIS PROTEIN"/>
    <property type="match status" value="1"/>
</dbReference>
<dbReference type="Pfam" id="PF08142">
    <property type="entry name" value="AARP2CN"/>
    <property type="match status" value="1"/>
</dbReference>
<dbReference type="Pfam" id="PF04950">
    <property type="entry name" value="RIBIOP_C"/>
    <property type="match status" value="1"/>
</dbReference>
<dbReference type="Pfam" id="PF22298">
    <property type="entry name" value="Tsr1_G-like"/>
    <property type="match status" value="1"/>
</dbReference>
<dbReference type="SMART" id="SM00785">
    <property type="entry name" value="AARP2CN"/>
    <property type="match status" value="1"/>
</dbReference>
<dbReference type="SMART" id="SM01362">
    <property type="entry name" value="DUF663"/>
    <property type="match status" value="1"/>
</dbReference>
<dbReference type="PROSITE" id="PS51714">
    <property type="entry name" value="G_BMS1"/>
    <property type="match status" value="1"/>
</dbReference>
<protein>
    <recommendedName>
        <fullName>Pre-rRNA-processing protein TSR1 homolog</fullName>
    </recommendedName>
</protein>
<reference key="1">
    <citation type="journal article" date="2000" name="DNA Res.">
        <title>Prediction of the coding sequences of unidentified human genes. XVI. The complete sequences of 150 new cDNA clones from brain which code for large proteins in vitro.</title>
        <authorList>
            <person name="Nagase T."/>
            <person name="Kikuno R."/>
            <person name="Ishikawa K."/>
            <person name="Hirosawa M."/>
            <person name="Ohara O."/>
        </authorList>
    </citation>
    <scope>NUCLEOTIDE SEQUENCE [LARGE SCALE MRNA]</scope>
    <source>
        <tissue>Brain</tissue>
    </source>
</reference>
<reference key="2">
    <citation type="submission" date="2005-09" db="EMBL/GenBank/DDBJ databases">
        <authorList>
            <person name="Mural R.J."/>
            <person name="Istrail S."/>
            <person name="Sutton G.G."/>
            <person name="Florea L."/>
            <person name="Halpern A.L."/>
            <person name="Mobarry C.M."/>
            <person name="Lippert R."/>
            <person name="Walenz B."/>
            <person name="Shatkay H."/>
            <person name="Dew I."/>
            <person name="Miller J.R."/>
            <person name="Flanigan M.J."/>
            <person name="Edwards N.J."/>
            <person name="Bolanos R."/>
            <person name="Fasulo D."/>
            <person name="Halldorsson B.V."/>
            <person name="Hannenhalli S."/>
            <person name="Turner R."/>
            <person name="Yooseph S."/>
            <person name="Lu F."/>
            <person name="Nusskern D.R."/>
            <person name="Shue B.C."/>
            <person name="Zheng X.H."/>
            <person name="Zhong F."/>
            <person name="Delcher A.L."/>
            <person name="Huson D.H."/>
            <person name="Kravitz S.A."/>
            <person name="Mouchard L."/>
            <person name="Reinert K."/>
            <person name="Remington K.A."/>
            <person name="Clark A.G."/>
            <person name="Waterman M.S."/>
            <person name="Eichler E.E."/>
            <person name="Adams M.D."/>
            <person name="Hunkapiller M.W."/>
            <person name="Myers E.W."/>
            <person name="Venter J.C."/>
        </authorList>
    </citation>
    <scope>NUCLEOTIDE SEQUENCE [LARGE SCALE GENOMIC DNA]</scope>
</reference>
<reference key="3">
    <citation type="journal article" date="2004" name="Genome Res.">
        <title>The status, quality, and expansion of the NIH full-length cDNA project: the Mammalian Gene Collection (MGC).</title>
        <authorList>
            <consortium name="The MGC Project Team"/>
        </authorList>
    </citation>
    <scope>NUCLEOTIDE SEQUENCE [LARGE SCALE MRNA]</scope>
    <scope>VARIANT GLY-386</scope>
    <source>
        <tissue>Brain</tissue>
        <tissue>Lymph</tissue>
    </source>
</reference>
<reference key="4">
    <citation type="submission" date="2007-07" db="UniProtKB">
        <authorList>
            <person name="Bienvenut W.V."/>
            <person name="Boldt K."/>
            <person name="von Kriegsheim A.F."/>
            <person name="Kolch W."/>
        </authorList>
    </citation>
    <scope>PROTEIN SEQUENCE OF 79-106; 140-151; 220-234; 251-273; 480-492; 518-537; 625-637 AND 721-732</scope>
    <scope>IDENTIFICATION BY MASS SPECTROMETRY</scope>
    <source>
        <tissue>Hepatoma</tissue>
    </source>
</reference>
<reference key="5">
    <citation type="journal article" date="2004" name="Nat. Genet.">
        <title>Complete sequencing and characterization of 21,243 full-length human cDNAs.</title>
        <authorList>
            <person name="Ota T."/>
            <person name="Suzuki Y."/>
            <person name="Nishikawa T."/>
            <person name="Otsuki T."/>
            <person name="Sugiyama T."/>
            <person name="Irie R."/>
            <person name="Wakamatsu A."/>
            <person name="Hayashi K."/>
            <person name="Sato H."/>
            <person name="Nagai K."/>
            <person name="Kimura K."/>
            <person name="Makita H."/>
            <person name="Sekine M."/>
            <person name="Obayashi M."/>
            <person name="Nishi T."/>
            <person name="Shibahara T."/>
            <person name="Tanaka T."/>
            <person name="Ishii S."/>
            <person name="Yamamoto J."/>
            <person name="Saito K."/>
            <person name="Kawai Y."/>
            <person name="Isono Y."/>
            <person name="Nakamura Y."/>
            <person name="Nagahari K."/>
            <person name="Murakami K."/>
            <person name="Yasuda T."/>
            <person name="Iwayanagi T."/>
            <person name="Wagatsuma M."/>
            <person name="Shiratori A."/>
            <person name="Sudo H."/>
            <person name="Hosoiri T."/>
            <person name="Kaku Y."/>
            <person name="Kodaira H."/>
            <person name="Kondo H."/>
            <person name="Sugawara M."/>
            <person name="Takahashi M."/>
            <person name="Kanda K."/>
            <person name="Yokoi T."/>
            <person name="Furuya T."/>
            <person name="Kikkawa E."/>
            <person name="Omura Y."/>
            <person name="Abe K."/>
            <person name="Kamihara K."/>
            <person name="Katsuta N."/>
            <person name="Sato K."/>
            <person name="Tanikawa M."/>
            <person name="Yamazaki M."/>
            <person name="Ninomiya K."/>
            <person name="Ishibashi T."/>
            <person name="Yamashita H."/>
            <person name="Murakawa K."/>
            <person name="Fujimori K."/>
            <person name="Tanai H."/>
            <person name="Kimata M."/>
            <person name="Watanabe M."/>
            <person name="Hiraoka S."/>
            <person name="Chiba Y."/>
            <person name="Ishida S."/>
            <person name="Ono Y."/>
            <person name="Takiguchi S."/>
            <person name="Watanabe S."/>
            <person name="Yosida M."/>
            <person name="Hotuta T."/>
            <person name="Kusano J."/>
            <person name="Kanehori K."/>
            <person name="Takahashi-Fujii A."/>
            <person name="Hara H."/>
            <person name="Tanase T.-O."/>
            <person name="Nomura Y."/>
            <person name="Togiya S."/>
            <person name="Komai F."/>
            <person name="Hara R."/>
            <person name="Takeuchi K."/>
            <person name="Arita M."/>
            <person name="Imose N."/>
            <person name="Musashino K."/>
            <person name="Yuuki H."/>
            <person name="Oshima A."/>
            <person name="Sasaki N."/>
            <person name="Aotsuka S."/>
            <person name="Yoshikawa Y."/>
            <person name="Matsunawa H."/>
            <person name="Ichihara T."/>
            <person name="Shiohata N."/>
            <person name="Sano S."/>
            <person name="Moriya S."/>
            <person name="Momiyama H."/>
            <person name="Satoh N."/>
            <person name="Takami S."/>
            <person name="Terashima Y."/>
            <person name="Suzuki O."/>
            <person name="Nakagawa S."/>
            <person name="Senoh A."/>
            <person name="Mizoguchi H."/>
            <person name="Goto Y."/>
            <person name="Shimizu F."/>
            <person name="Wakebe H."/>
            <person name="Hishigaki H."/>
            <person name="Watanabe T."/>
            <person name="Sugiyama A."/>
            <person name="Takemoto M."/>
            <person name="Kawakami B."/>
            <person name="Yamazaki M."/>
            <person name="Watanabe K."/>
            <person name="Kumagai A."/>
            <person name="Itakura S."/>
            <person name="Fukuzumi Y."/>
            <person name="Fujimori Y."/>
            <person name="Komiyama M."/>
            <person name="Tashiro H."/>
            <person name="Tanigami A."/>
            <person name="Fujiwara T."/>
            <person name="Ono T."/>
            <person name="Yamada K."/>
            <person name="Fujii Y."/>
            <person name="Ozaki K."/>
            <person name="Hirao M."/>
            <person name="Ohmori Y."/>
            <person name="Kawabata A."/>
            <person name="Hikiji T."/>
            <person name="Kobatake N."/>
            <person name="Inagaki H."/>
            <person name="Ikema Y."/>
            <person name="Okamoto S."/>
            <person name="Okitani R."/>
            <person name="Kawakami T."/>
            <person name="Noguchi S."/>
            <person name="Itoh T."/>
            <person name="Shigeta K."/>
            <person name="Senba T."/>
            <person name="Matsumura K."/>
            <person name="Nakajima Y."/>
            <person name="Mizuno T."/>
            <person name="Morinaga M."/>
            <person name="Sasaki M."/>
            <person name="Togashi T."/>
            <person name="Oyama M."/>
            <person name="Hata H."/>
            <person name="Watanabe M."/>
            <person name="Komatsu T."/>
            <person name="Mizushima-Sugano J."/>
            <person name="Satoh T."/>
            <person name="Shirai Y."/>
            <person name="Takahashi Y."/>
            <person name="Nakagawa K."/>
            <person name="Okumura K."/>
            <person name="Nagase T."/>
            <person name="Nomura N."/>
            <person name="Kikuchi H."/>
            <person name="Masuho Y."/>
            <person name="Yamashita R."/>
            <person name="Nakai K."/>
            <person name="Yada T."/>
            <person name="Nakamura Y."/>
            <person name="Ohara O."/>
            <person name="Isogai T."/>
            <person name="Sugano S."/>
        </authorList>
    </citation>
    <scope>NUCLEOTIDE SEQUENCE [LARGE SCALE MRNA] OF 135-804</scope>
    <source>
        <tissue>Teratocarcinoma</tissue>
    </source>
</reference>
<reference key="6">
    <citation type="journal article" date="2011" name="BMC Syst. Biol.">
        <title>Initial characterization of the human central proteome.</title>
        <authorList>
            <person name="Burkard T.R."/>
            <person name="Planyavsky M."/>
            <person name="Kaupe I."/>
            <person name="Breitwieser F.P."/>
            <person name="Buerckstuemmer T."/>
            <person name="Bennett K.L."/>
            <person name="Superti-Furga G."/>
            <person name="Colinge J."/>
        </authorList>
    </citation>
    <scope>IDENTIFICATION BY MASS SPECTROMETRY [LARGE SCALE ANALYSIS]</scope>
</reference>
<sequence length="804" mass="91810">MAAHRPGPLKQQNKAHKGGRHRGRGSAQRDGKGRLALKTLSKKVRKELSRVDQRHRASQLRKQKKEAVLAEKRQLGGKDGPPHQVLVVPLHSRISLPEAMQLLQDRDTGTVHLNELGNTQNFMLLCPRLKHRWFFTSARPGDLHVVLDMAKVADTILFLLDPLEGWDSTGDYCLSCLFAQGLPTYTLAVQGISGLPLKKQIDTRKKLSKAVEKRFPHDKLLLLDTQQEAGMLLRQLANQKQQHLAFRDRRAYLFAHAVDFVPSEENNLVGTLKISGYVRGQTLNVNRLLHIVGYGDFQMKQIDAPGDPFPLNPRGIKPQKDPDMAMEICATDAVDDMEEGLKVLMKADPGRQESLQAEVIPDPMEGEQTWPTEEELSEAKDFLKESSKVVKKVPKGTSSYQAEWILDGGSQSGGEGDEYEYDDMEHEDFMEEESQDESSEEEEEYETMTIGESVHDDLYDKKVDEEAEAKMLEKYKQERLEEMFPDEVDTPRDVAARIRFQKYRGLKSFRTSPWDPKENLPQDYARIFQFQNFTNTRKSIFKEVEEKEVEGAEVGWYVTLHVSEVPVSVVECFRQGTPLIAFSLLPHEQKMSVLNMVVRRDPGNTEPVKAKEELIFHCGFRRFRASPLFSQHTAADKHKLQRFLTADMALVATVYAPITFPPASVLLFKQKSNGMHSLIATGHLMSVDPDRMVIKRVVLSGHPFKIFTKMAVVRYMFFNREDVLWFKPVELRTKWGRRGHIKEPLGTHGHMKCSFDGKLKSQDTVLMNLYKRVFPKWTYDPYVPEPVPWLKSEISSTVPQGGME</sequence>
<proteinExistence type="evidence at protein level"/>